<protein>
    <recommendedName>
        <fullName>Chemotaxis protein CheA</fullName>
        <ecNumber>2.7.13.3</ecNumber>
    </recommendedName>
</protein>
<gene>
    <name type="primary">cheA</name>
    <name type="ordered locus">lmo0692</name>
</gene>
<organism>
    <name type="scientific">Listeria monocytogenes serovar 1/2a (strain ATCC BAA-679 / EGD-e)</name>
    <dbReference type="NCBI Taxonomy" id="169963"/>
    <lineage>
        <taxon>Bacteria</taxon>
        <taxon>Bacillati</taxon>
        <taxon>Bacillota</taxon>
        <taxon>Bacilli</taxon>
        <taxon>Bacillales</taxon>
        <taxon>Listeriaceae</taxon>
        <taxon>Listeria</taxon>
    </lineage>
</organism>
<proteinExistence type="inferred from homology"/>
<evidence type="ECO:0000250" key="1"/>
<evidence type="ECO:0000255" key="2">
    <source>
        <dbReference type="PROSITE-ProRule" id="PRU00052"/>
    </source>
</evidence>
<evidence type="ECO:0000255" key="3">
    <source>
        <dbReference type="PROSITE-ProRule" id="PRU00107"/>
    </source>
</evidence>
<evidence type="ECO:0000255" key="4">
    <source>
        <dbReference type="PROSITE-ProRule" id="PRU00110"/>
    </source>
</evidence>
<evidence type="ECO:0000305" key="5"/>
<name>CHEA_LISMO</name>
<reference key="1">
    <citation type="journal article" date="1994" name="DNA Seq.">
        <title>Characterization of two putative Listeria monocytogenes genes encoding polypeptides homologous to the sensor protein CheA and the response regulator CheY of chemotaxis.</title>
        <authorList>
            <person name="Dons L."/>
            <person name="Olsen J.E."/>
            <person name="Rasmussen O.F."/>
        </authorList>
    </citation>
    <scope>NUCLEOTIDE SEQUENCE [GENOMIC DNA]</scope>
    <source>
        <strain>12067</strain>
    </source>
</reference>
<reference key="2">
    <citation type="journal article" date="2001" name="Science">
        <title>Comparative genomics of Listeria species.</title>
        <authorList>
            <person name="Glaser P."/>
            <person name="Frangeul L."/>
            <person name="Buchrieser C."/>
            <person name="Rusniok C."/>
            <person name="Amend A."/>
            <person name="Baquero F."/>
            <person name="Berche P."/>
            <person name="Bloecker H."/>
            <person name="Brandt P."/>
            <person name="Chakraborty T."/>
            <person name="Charbit A."/>
            <person name="Chetouani F."/>
            <person name="Couve E."/>
            <person name="de Daruvar A."/>
            <person name="Dehoux P."/>
            <person name="Domann E."/>
            <person name="Dominguez-Bernal G."/>
            <person name="Duchaud E."/>
            <person name="Durant L."/>
            <person name="Dussurget O."/>
            <person name="Entian K.-D."/>
            <person name="Fsihi H."/>
            <person name="Garcia-del Portillo F."/>
            <person name="Garrido P."/>
            <person name="Gautier L."/>
            <person name="Goebel W."/>
            <person name="Gomez-Lopez N."/>
            <person name="Hain T."/>
            <person name="Hauf J."/>
            <person name="Jackson D."/>
            <person name="Jones L.-M."/>
            <person name="Kaerst U."/>
            <person name="Kreft J."/>
            <person name="Kuhn M."/>
            <person name="Kunst F."/>
            <person name="Kurapkat G."/>
            <person name="Madueno E."/>
            <person name="Maitournam A."/>
            <person name="Mata Vicente J."/>
            <person name="Ng E."/>
            <person name="Nedjari H."/>
            <person name="Nordsiek G."/>
            <person name="Novella S."/>
            <person name="de Pablos B."/>
            <person name="Perez-Diaz J.-C."/>
            <person name="Purcell R."/>
            <person name="Remmel B."/>
            <person name="Rose M."/>
            <person name="Schlueter T."/>
            <person name="Simoes N."/>
            <person name="Tierrez A."/>
            <person name="Vazquez-Boland J.-A."/>
            <person name="Voss H."/>
            <person name="Wehland J."/>
            <person name="Cossart P."/>
        </authorList>
    </citation>
    <scope>NUCLEOTIDE SEQUENCE [LARGE SCALE GENOMIC DNA]</scope>
    <source>
        <strain>ATCC BAA-679 / EGD-e</strain>
    </source>
</reference>
<keyword id="KW-0067">ATP-binding</keyword>
<keyword id="KW-0145">Chemotaxis</keyword>
<keyword id="KW-0963">Cytoplasm</keyword>
<keyword id="KW-0418">Kinase</keyword>
<keyword id="KW-0547">Nucleotide-binding</keyword>
<keyword id="KW-0597">Phosphoprotein</keyword>
<keyword id="KW-1185">Reference proteome</keyword>
<keyword id="KW-0808">Transferase</keyword>
<keyword id="KW-0902">Two-component regulatory system</keyword>
<accession>Q48768</accession>
<comment type="function">
    <text evidence="1">Involved in the transmission of sensory signals from the chemoreceptors to the flagellar motors. CheA is autophosphorylated; it can transfer its phosphate group to either CheB or CheY (By similarity).</text>
</comment>
<comment type="catalytic activity">
    <reaction>
        <text>ATP + protein L-histidine = ADP + protein N-phospho-L-histidine.</text>
        <dbReference type="EC" id="2.7.13.3"/>
    </reaction>
</comment>
<comment type="subcellular location">
    <subcellularLocation>
        <location evidence="5">Cytoplasm</location>
    </subcellularLocation>
</comment>
<feature type="chain" id="PRO_0000074715" description="Chemotaxis protein CheA">
    <location>
        <begin position="1"/>
        <end position="618"/>
    </location>
</feature>
<feature type="domain" description="HPt" evidence="4">
    <location>
        <begin position="1"/>
        <end position="102"/>
    </location>
</feature>
<feature type="domain" description="Histidine kinase" evidence="3">
    <location>
        <begin position="233"/>
        <end position="488"/>
    </location>
</feature>
<feature type="domain" description="CheW-like" evidence="2">
    <location>
        <begin position="490"/>
        <end position="618"/>
    </location>
</feature>
<feature type="modified residue" description="Phosphohistidine; by autocatalysis" evidence="3">
    <location>
        <position position="45"/>
    </location>
</feature>
<feature type="sequence conflict" description="In Ref. 1; CAA53765." evidence="5" ref="1">
    <original>T</original>
    <variation>A</variation>
    <location>
        <position position="132"/>
    </location>
</feature>
<feature type="sequence conflict" description="In Ref. 1; CAA53765." evidence="5" ref="1">
    <original>A</original>
    <variation>Q</variation>
    <location>
        <position position="140"/>
    </location>
</feature>
<feature type="sequence conflict" description="In Ref. 1; CAA53765." evidence="5" ref="1">
    <original>D</original>
    <variation>E</variation>
    <location>
        <position position="197"/>
    </location>
</feature>
<feature type="sequence conflict" description="In Ref. 1; CAA53765." evidence="5" ref="1">
    <original>K</original>
    <variation>E</variation>
    <location>
        <position position="200"/>
    </location>
</feature>
<feature type="sequence conflict" description="In Ref. 1; CAA53765." evidence="5" ref="1">
    <original>I</original>
    <variation>V</variation>
    <location>
        <position position="203"/>
    </location>
</feature>
<sequence>MTTNMLDLFIEEASEHLQALNDNLLQLEKDPTNGQLVSEIFRSAHTFKGMSATMGFQQVADLTHAMENVLDEVRNNRLAVTEHLVDIIFTCTSHLETMVSDIQHGGQGAADISKTVADLEALLHPEQETDLTVEKTYRIAIQIEEAAILKAVRAVMCLERLAEMGIISETTPDREAIELEEFEQSFEVVLESAQTKDEIKAVILDISEIEKVTVTEEVEEVQVIEPIKKAAKQTTKRLENKTIRVQLEKIEKLMNVFEESVIERARIDEIAEKTNNKELMEHLGRFSSISKEIQNGLLNMRMVPVDSVFNRFPKMVRTLAKELGKKIDLVIEGADTEVDKIVIDEIGDPLVHLIRNSVDHGAETVEVRRKNGKNETATINLKAFHSGNNVVIEIADDGAGINKRKVLEKAIAKNVVTRAESTKMTDAEIFDLLFDSGFSTADQVSDLSGRGVGLDVVRNTILKIGGKISVESSENAGSTFRIEIPLTLSIIQSMLVATSERRYAVPLANVAEAITINPADIQHVHGKDLINYRETIIEVLDLGECFHETPLNDTDELLLLVVKNAKRTFGLIIKDIIGQREIVLKTLGGFFSESQIAFSGATILGDGRVVLILNLETF</sequence>
<dbReference type="EC" id="2.7.13.3"/>
<dbReference type="EMBL" id="X76170">
    <property type="protein sequence ID" value="CAA53765.1"/>
    <property type="molecule type" value="Genomic_DNA"/>
</dbReference>
<dbReference type="EMBL" id="AL591976">
    <property type="protein sequence ID" value="CAC98770.1"/>
    <property type="molecule type" value="Genomic_DNA"/>
</dbReference>
<dbReference type="PIR" id="AD1161">
    <property type="entry name" value="AD1161"/>
</dbReference>
<dbReference type="RefSeq" id="NP_464219.1">
    <property type="nucleotide sequence ID" value="NC_003210.1"/>
</dbReference>
<dbReference type="RefSeq" id="WP_003733164.1">
    <property type="nucleotide sequence ID" value="NZ_CP149495.1"/>
</dbReference>
<dbReference type="SMR" id="Q48768"/>
<dbReference type="STRING" id="169963.gene:17593343"/>
<dbReference type="PaxDb" id="169963-lmo0692"/>
<dbReference type="EnsemblBacteria" id="CAC98770">
    <property type="protein sequence ID" value="CAC98770"/>
    <property type="gene ID" value="CAC98770"/>
</dbReference>
<dbReference type="GeneID" id="985032"/>
<dbReference type="KEGG" id="lmo:lmo0692"/>
<dbReference type="PATRIC" id="fig|169963.11.peg.713"/>
<dbReference type="eggNOG" id="COG0643">
    <property type="taxonomic scope" value="Bacteria"/>
</dbReference>
<dbReference type="eggNOG" id="COG2198">
    <property type="taxonomic scope" value="Bacteria"/>
</dbReference>
<dbReference type="HOGENOM" id="CLU_000650_3_6_9"/>
<dbReference type="OrthoDB" id="9803176at2"/>
<dbReference type="PhylomeDB" id="Q48768"/>
<dbReference type="BioCyc" id="LMON169963:LMO0692-MONOMER"/>
<dbReference type="BRENDA" id="2.7.13.3">
    <property type="organism ID" value="3045"/>
</dbReference>
<dbReference type="Proteomes" id="UP000000817">
    <property type="component" value="Chromosome"/>
</dbReference>
<dbReference type="GO" id="GO:0005737">
    <property type="term" value="C:cytoplasm"/>
    <property type="evidence" value="ECO:0007669"/>
    <property type="project" value="UniProtKB-SubCell"/>
</dbReference>
<dbReference type="GO" id="GO:0005524">
    <property type="term" value="F:ATP binding"/>
    <property type="evidence" value="ECO:0007669"/>
    <property type="project" value="UniProtKB-KW"/>
</dbReference>
<dbReference type="GO" id="GO:0000155">
    <property type="term" value="F:phosphorelay sensor kinase activity"/>
    <property type="evidence" value="ECO:0007669"/>
    <property type="project" value="InterPro"/>
</dbReference>
<dbReference type="GO" id="GO:0006935">
    <property type="term" value="P:chemotaxis"/>
    <property type="evidence" value="ECO:0007669"/>
    <property type="project" value="UniProtKB-KW"/>
</dbReference>
<dbReference type="CDD" id="cd00731">
    <property type="entry name" value="CheA_reg"/>
    <property type="match status" value="1"/>
</dbReference>
<dbReference type="CDD" id="cd16916">
    <property type="entry name" value="HATPase_CheA-like"/>
    <property type="match status" value="1"/>
</dbReference>
<dbReference type="CDD" id="cd00088">
    <property type="entry name" value="HPT"/>
    <property type="match status" value="1"/>
</dbReference>
<dbReference type="FunFam" id="3.30.565.10:FF:000016">
    <property type="entry name" value="Chemotaxis protein CheA, putative"/>
    <property type="match status" value="1"/>
</dbReference>
<dbReference type="Gene3D" id="1.10.287.560">
    <property type="entry name" value="Histidine kinase CheA-like, homodimeric domain"/>
    <property type="match status" value="1"/>
</dbReference>
<dbReference type="Gene3D" id="3.30.70.1110">
    <property type="entry name" value="Histidine kinase CheA-like, P2 response regulator-binding domain"/>
    <property type="match status" value="1"/>
</dbReference>
<dbReference type="Gene3D" id="3.30.565.10">
    <property type="entry name" value="Histidine kinase-like ATPase, C-terminal domain"/>
    <property type="match status" value="1"/>
</dbReference>
<dbReference type="Gene3D" id="1.20.120.160">
    <property type="entry name" value="HPT domain"/>
    <property type="match status" value="1"/>
</dbReference>
<dbReference type="Gene3D" id="2.30.30.40">
    <property type="entry name" value="SH3 Domains"/>
    <property type="match status" value="1"/>
</dbReference>
<dbReference type="InterPro" id="IPR051315">
    <property type="entry name" value="Bact_Chemotaxis_CheA"/>
</dbReference>
<dbReference type="InterPro" id="IPR004105">
    <property type="entry name" value="CheA-like_dim"/>
</dbReference>
<dbReference type="InterPro" id="IPR037006">
    <property type="entry name" value="CheA-like_homodim_sf"/>
</dbReference>
<dbReference type="InterPro" id="IPR037052">
    <property type="entry name" value="CheA-like_P2_sf"/>
</dbReference>
<dbReference type="InterPro" id="IPR010808">
    <property type="entry name" value="CheA_P2-bd"/>
</dbReference>
<dbReference type="InterPro" id="IPR036061">
    <property type="entry name" value="CheW-like_dom_sf"/>
</dbReference>
<dbReference type="InterPro" id="IPR002545">
    <property type="entry name" value="CheW-lke_dom"/>
</dbReference>
<dbReference type="InterPro" id="IPR035891">
    <property type="entry name" value="CheY-binding_CheA"/>
</dbReference>
<dbReference type="InterPro" id="IPR036890">
    <property type="entry name" value="HATPase_C_sf"/>
</dbReference>
<dbReference type="InterPro" id="IPR005467">
    <property type="entry name" value="His_kinase_dom"/>
</dbReference>
<dbReference type="InterPro" id="IPR036097">
    <property type="entry name" value="HisK_dim/P_sf"/>
</dbReference>
<dbReference type="InterPro" id="IPR036641">
    <property type="entry name" value="HPT_dom_sf"/>
</dbReference>
<dbReference type="InterPro" id="IPR004358">
    <property type="entry name" value="Sig_transdc_His_kin-like_C"/>
</dbReference>
<dbReference type="InterPro" id="IPR008207">
    <property type="entry name" value="Sig_transdc_His_kin_Hpt_dom"/>
</dbReference>
<dbReference type="PANTHER" id="PTHR43395:SF1">
    <property type="entry name" value="CHEMOTAXIS PROTEIN CHEA"/>
    <property type="match status" value="1"/>
</dbReference>
<dbReference type="PANTHER" id="PTHR43395">
    <property type="entry name" value="SENSOR HISTIDINE KINASE CHEA"/>
    <property type="match status" value="1"/>
</dbReference>
<dbReference type="Pfam" id="PF01584">
    <property type="entry name" value="CheW"/>
    <property type="match status" value="1"/>
</dbReference>
<dbReference type="Pfam" id="PF02895">
    <property type="entry name" value="H-kinase_dim"/>
    <property type="match status" value="1"/>
</dbReference>
<dbReference type="Pfam" id="PF02518">
    <property type="entry name" value="HATPase_c"/>
    <property type="match status" value="1"/>
</dbReference>
<dbReference type="Pfam" id="PF01627">
    <property type="entry name" value="Hpt"/>
    <property type="match status" value="1"/>
</dbReference>
<dbReference type="Pfam" id="PF07194">
    <property type="entry name" value="P2"/>
    <property type="match status" value="1"/>
</dbReference>
<dbReference type="PRINTS" id="PR00344">
    <property type="entry name" value="BCTRLSENSOR"/>
</dbReference>
<dbReference type="SMART" id="SM00260">
    <property type="entry name" value="CheW"/>
    <property type="match status" value="1"/>
</dbReference>
<dbReference type="SMART" id="SM01231">
    <property type="entry name" value="H-kinase_dim"/>
    <property type="match status" value="1"/>
</dbReference>
<dbReference type="SMART" id="SM00387">
    <property type="entry name" value="HATPase_c"/>
    <property type="match status" value="1"/>
</dbReference>
<dbReference type="SMART" id="SM00073">
    <property type="entry name" value="HPT"/>
    <property type="match status" value="1"/>
</dbReference>
<dbReference type="SUPFAM" id="SSF55874">
    <property type="entry name" value="ATPase domain of HSP90 chaperone/DNA topoisomerase II/histidine kinase"/>
    <property type="match status" value="1"/>
</dbReference>
<dbReference type="SUPFAM" id="SSF50341">
    <property type="entry name" value="CheW-like"/>
    <property type="match status" value="1"/>
</dbReference>
<dbReference type="SUPFAM" id="SSF55052">
    <property type="entry name" value="CheY-binding domain of CheA"/>
    <property type="match status" value="1"/>
</dbReference>
<dbReference type="SUPFAM" id="SSF47226">
    <property type="entry name" value="Histidine-containing phosphotransfer domain, HPT domain"/>
    <property type="match status" value="1"/>
</dbReference>
<dbReference type="SUPFAM" id="SSF47384">
    <property type="entry name" value="Homodimeric domain of signal transducing histidine kinase"/>
    <property type="match status" value="1"/>
</dbReference>
<dbReference type="PROSITE" id="PS50851">
    <property type="entry name" value="CHEW"/>
    <property type="match status" value="1"/>
</dbReference>
<dbReference type="PROSITE" id="PS50109">
    <property type="entry name" value="HIS_KIN"/>
    <property type="match status" value="1"/>
</dbReference>
<dbReference type="PROSITE" id="PS50894">
    <property type="entry name" value="HPT"/>
    <property type="match status" value="1"/>
</dbReference>